<organism evidence="10">
    <name type="scientific">Caenorhabditis elegans</name>
    <dbReference type="NCBI Taxonomy" id="6239"/>
    <lineage>
        <taxon>Eukaryota</taxon>
        <taxon>Metazoa</taxon>
        <taxon>Ecdysozoa</taxon>
        <taxon>Nematoda</taxon>
        <taxon>Chromadorea</taxon>
        <taxon>Rhabditida</taxon>
        <taxon>Rhabditina</taxon>
        <taxon>Rhabditomorpha</taxon>
        <taxon>Rhabditoidea</taxon>
        <taxon>Rhabditidae</taxon>
        <taxon>Peloderinae</taxon>
        <taxon>Caenorhabditis</taxon>
    </lineage>
</organism>
<gene>
    <name evidence="11" type="primary">acr-15</name>
    <name evidence="11" type="ORF">F25G6.4</name>
</gene>
<accession>O16926</accession>
<dbReference type="EMBL" id="BX284605">
    <property type="protein sequence ID" value="CCD64104.1"/>
    <property type="molecule type" value="Genomic_DNA"/>
</dbReference>
<dbReference type="PIR" id="E89134">
    <property type="entry name" value="E89134"/>
</dbReference>
<dbReference type="RefSeq" id="NP_505206.2">
    <property type="nucleotide sequence ID" value="NM_072805.6"/>
</dbReference>
<dbReference type="SMR" id="O16926"/>
<dbReference type="FunCoup" id="O16926">
    <property type="interactions" value="72"/>
</dbReference>
<dbReference type="STRING" id="6239.F25G6.4.1"/>
<dbReference type="PaxDb" id="6239-F25G6.4"/>
<dbReference type="EnsemblMetazoa" id="F25G6.4.1">
    <property type="protein sequence ID" value="F25G6.4.1"/>
    <property type="gene ID" value="WBGene00000054"/>
</dbReference>
<dbReference type="GeneID" id="191602"/>
<dbReference type="KEGG" id="cel:CELE_F25G6.4"/>
<dbReference type="UCSC" id="F25G6.4">
    <property type="organism name" value="c. elegans"/>
</dbReference>
<dbReference type="AGR" id="WB:WBGene00000054"/>
<dbReference type="CTD" id="191602"/>
<dbReference type="WormBase" id="F25G6.4">
    <property type="protein sequence ID" value="CE37637"/>
    <property type="gene ID" value="WBGene00000054"/>
    <property type="gene designation" value="acr-15"/>
</dbReference>
<dbReference type="eggNOG" id="KOG3646">
    <property type="taxonomic scope" value="Eukaryota"/>
</dbReference>
<dbReference type="GeneTree" id="ENSGT00940000170933"/>
<dbReference type="HOGENOM" id="CLU_018074_0_3_1"/>
<dbReference type="InParanoid" id="O16926"/>
<dbReference type="OMA" id="YAFNLIM"/>
<dbReference type="OrthoDB" id="5975154at2759"/>
<dbReference type="PhylomeDB" id="O16926"/>
<dbReference type="PRO" id="PR:O16926"/>
<dbReference type="Proteomes" id="UP000001940">
    <property type="component" value="Chromosome V"/>
</dbReference>
<dbReference type="Bgee" id="WBGene00000054">
    <property type="expression patterns" value="Expressed in larva and 3 other cell types or tissues"/>
</dbReference>
<dbReference type="GO" id="GO:0005892">
    <property type="term" value="C:acetylcholine-gated channel complex"/>
    <property type="evidence" value="ECO:0000318"/>
    <property type="project" value="GO_Central"/>
</dbReference>
<dbReference type="GO" id="GO:0043005">
    <property type="term" value="C:neuron projection"/>
    <property type="evidence" value="ECO:0000318"/>
    <property type="project" value="GO_Central"/>
</dbReference>
<dbReference type="GO" id="GO:0005886">
    <property type="term" value="C:plasma membrane"/>
    <property type="evidence" value="ECO:0000318"/>
    <property type="project" value="GO_Central"/>
</dbReference>
<dbReference type="GO" id="GO:0045211">
    <property type="term" value="C:postsynaptic membrane"/>
    <property type="evidence" value="ECO:0007669"/>
    <property type="project" value="UniProtKB-SubCell"/>
</dbReference>
<dbReference type="GO" id="GO:0045202">
    <property type="term" value="C:synapse"/>
    <property type="evidence" value="ECO:0000318"/>
    <property type="project" value="GO_Central"/>
</dbReference>
<dbReference type="GO" id="GO:0015464">
    <property type="term" value="F:acetylcholine receptor activity"/>
    <property type="evidence" value="ECO:0000250"/>
    <property type="project" value="WormBase"/>
</dbReference>
<dbReference type="GO" id="GO:0022848">
    <property type="term" value="F:acetylcholine-gated monoatomic cation-selective channel activity"/>
    <property type="evidence" value="ECO:0007669"/>
    <property type="project" value="InterPro"/>
</dbReference>
<dbReference type="GO" id="GO:0005231">
    <property type="term" value="F:excitatory extracellular ligand-gated monoatomic ion channel activity"/>
    <property type="evidence" value="ECO:0000318"/>
    <property type="project" value="GO_Central"/>
</dbReference>
<dbReference type="GO" id="GO:1904315">
    <property type="term" value="F:transmitter-gated monoatomic ion channel activity involved in regulation of postsynaptic membrane potential"/>
    <property type="evidence" value="ECO:0000318"/>
    <property type="project" value="GO_Central"/>
</dbReference>
<dbReference type="GO" id="GO:0071316">
    <property type="term" value="P:cellular response to nicotine"/>
    <property type="evidence" value="ECO:0000315"/>
    <property type="project" value="UniProtKB"/>
</dbReference>
<dbReference type="GO" id="GO:0007268">
    <property type="term" value="P:chemical synaptic transmission"/>
    <property type="evidence" value="ECO:0000315"/>
    <property type="project" value="WormBase"/>
</dbReference>
<dbReference type="GO" id="GO:0034220">
    <property type="term" value="P:monoatomic ion transmembrane transport"/>
    <property type="evidence" value="ECO:0000318"/>
    <property type="project" value="GO_Central"/>
</dbReference>
<dbReference type="GO" id="GO:0042391">
    <property type="term" value="P:regulation of membrane potential"/>
    <property type="evidence" value="ECO:0000318"/>
    <property type="project" value="GO_Central"/>
</dbReference>
<dbReference type="CDD" id="cd18997">
    <property type="entry name" value="LGIC_ECD_nAChR"/>
    <property type="match status" value="1"/>
</dbReference>
<dbReference type="CDD" id="cd19051">
    <property type="entry name" value="LGIC_TM_cation"/>
    <property type="match status" value="1"/>
</dbReference>
<dbReference type="FunFam" id="1.20.58.390:FF:000127">
    <property type="entry name" value="AcetylCholine Receptor"/>
    <property type="match status" value="1"/>
</dbReference>
<dbReference type="FunFam" id="2.70.170.10:FF:000016">
    <property type="entry name" value="Nicotinic acetylcholine receptor subunit"/>
    <property type="match status" value="1"/>
</dbReference>
<dbReference type="Gene3D" id="2.70.170.10">
    <property type="entry name" value="Neurotransmitter-gated ion-channel ligand-binding domain"/>
    <property type="match status" value="1"/>
</dbReference>
<dbReference type="Gene3D" id="1.20.58.390">
    <property type="entry name" value="Neurotransmitter-gated ion-channel transmembrane domain"/>
    <property type="match status" value="2"/>
</dbReference>
<dbReference type="InterPro" id="IPR006202">
    <property type="entry name" value="Neur_chan_lig-bd"/>
</dbReference>
<dbReference type="InterPro" id="IPR036734">
    <property type="entry name" value="Neur_chan_lig-bd_sf"/>
</dbReference>
<dbReference type="InterPro" id="IPR006201">
    <property type="entry name" value="Neur_channel"/>
</dbReference>
<dbReference type="InterPro" id="IPR036719">
    <property type="entry name" value="Neuro-gated_channel_TM_sf"/>
</dbReference>
<dbReference type="InterPro" id="IPR038050">
    <property type="entry name" value="Neuro_actylchol_rec"/>
</dbReference>
<dbReference type="InterPro" id="IPR006029">
    <property type="entry name" value="Neurotrans-gated_channel_TM"/>
</dbReference>
<dbReference type="InterPro" id="IPR018000">
    <property type="entry name" value="Neurotransmitter_ion_chnl_CS"/>
</dbReference>
<dbReference type="InterPro" id="IPR002394">
    <property type="entry name" value="Nicotinic_acetylcholine_rcpt"/>
</dbReference>
<dbReference type="NCBIfam" id="TIGR00860">
    <property type="entry name" value="LIC"/>
    <property type="match status" value="1"/>
</dbReference>
<dbReference type="PANTHER" id="PTHR18945">
    <property type="entry name" value="NEUROTRANSMITTER GATED ION CHANNEL"/>
    <property type="match status" value="1"/>
</dbReference>
<dbReference type="Pfam" id="PF02931">
    <property type="entry name" value="Neur_chan_LBD"/>
    <property type="match status" value="1"/>
</dbReference>
<dbReference type="Pfam" id="PF02932">
    <property type="entry name" value="Neur_chan_memb"/>
    <property type="match status" value="1"/>
</dbReference>
<dbReference type="PRINTS" id="PR00254">
    <property type="entry name" value="NICOTINICR"/>
</dbReference>
<dbReference type="PRINTS" id="PR00252">
    <property type="entry name" value="NRIONCHANNEL"/>
</dbReference>
<dbReference type="SUPFAM" id="SSF90112">
    <property type="entry name" value="Neurotransmitter-gated ion-channel transmembrane pore"/>
    <property type="match status" value="1"/>
</dbReference>
<dbReference type="SUPFAM" id="SSF63712">
    <property type="entry name" value="Nicotinic receptor ligand binding domain-like"/>
    <property type="match status" value="1"/>
</dbReference>
<dbReference type="PROSITE" id="PS00236">
    <property type="entry name" value="NEUROTR_ION_CHANNEL"/>
    <property type="match status" value="1"/>
</dbReference>
<proteinExistence type="evidence at transcript level"/>
<evidence type="ECO:0000250" key="1">
    <source>
        <dbReference type="UniProtKB" id="P32297"/>
    </source>
</evidence>
<evidence type="ECO:0000250" key="2">
    <source>
        <dbReference type="UniProtKB" id="P48180"/>
    </source>
</evidence>
<evidence type="ECO:0000250" key="3">
    <source>
        <dbReference type="UniProtKB" id="Q9UGM1"/>
    </source>
</evidence>
<evidence type="ECO:0000255" key="4"/>
<evidence type="ECO:0000255" key="5">
    <source>
        <dbReference type="PROSITE-ProRule" id="PRU00498"/>
    </source>
</evidence>
<evidence type="ECO:0000269" key="6">
    <source>
    </source>
</evidence>
<evidence type="ECO:0000269" key="7">
    <source>
    </source>
</evidence>
<evidence type="ECO:0000303" key="8">
    <source>
    </source>
</evidence>
<evidence type="ECO:0000305" key="9"/>
<evidence type="ECO:0000312" key="10">
    <source>
        <dbReference type="Proteomes" id="UP000001940"/>
    </source>
</evidence>
<evidence type="ECO:0000312" key="11">
    <source>
        <dbReference type="WormBase" id="F25G6.4"/>
    </source>
</evidence>
<feature type="signal peptide" evidence="4">
    <location>
        <begin position="1"/>
        <end position="18"/>
    </location>
</feature>
<feature type="chain" id="PRO_5022273040" description="Acetylcholine receptor subunit alpha-type acr-15" evidence="4">
    <location>
        <begin position="19"/>
        <end position="479"/>
    </location>
</feature>
<feature type="topological domain" description="Extracellular" evidence="9">
    <location>
        <begin position="19"/>
        <end position="230"/>
    </location>
</feature>
<feature type="transmembrane region" description="Helical" evidence="4">
    <location>
        <begin position="231"/>
        <end position="251"/>
    </location>
</feature>
<feature type="topological domain" description="Cytoplasmic" evidence="9">
    <location>
        <begin position="252"/>
        <end position="257"/>
    </location>
</feature>
<feature type="transmembrane region" description="Helical" evidence="4">
    <location>
        <begin position="258"/>
        <end position="278"/>
    </location>
</feature>
<feature type="topological domain" description="Extracellular" evidence="9">
    <location>
        <begin position="279"/>
        <end position="285"/>
    </location>
</feature>
<feature type="transmembrane region" description="Helical" evidence="4">
    <location>
        <begin position="286"/>
        <end position="306"/>
    </location>
</feature>
<feature type="topological domain" description="Cytoplasmic" evidence="9">
    <location>
        <begin position="307"/>
        <end position="453"/>
    </location>
</feature>
<feature type="transmembrane region" description="Helical" evidence="4">
    <location>
        <begin position="454"/>
        <end position="474"/>
    </location>
</feature>
<feature type="topological domain" description="Extracellular" evidence="9">
    <location>
        <begin position="475"/>
        <end position="479"/>
    </location>
</feature>
<feature type="glycosylation site" description="N-linked (GlcNAc...) asparagine" evidence="5">
    <location>
        <position position="60"/>
    </location>
</feature>
<feature type="glycosylation site" description="N-linked (GlcNAc...) asparagine" evidence="5">
    <location>
        <position position="92"/>
    </location>
</feature>
<feature type="glycosylation site" description="N-linked (GlcNAc...) asparagine" evidence="5">
    <location>
        <position position="200"/>
    </location>
</feature>
<feature type="disulfide bond" evidence="3">
    <location>
        <begin position="146"/>
        <end position="160"/>
    </location>
</feature>
<feature type="disulfide bond" evidence="3">
    <location>
        <begin position="208"/>
        <end position="209"/>
    </location>
</feature>
<protein>
    <recommendedName>
        <fullName evidence="9">Acetylcholine receptor subunit alpha-type acr-15</fullName>
    </recommendedName>
    <alternativeName>
        <fullName evidence="8">Nicotinic acetylcholine receptor subunit acr-15</fullName>
    </alternativeName>
</protein>
<comment type="function">
    <text evidence="1 6 7">After binding acetylcholine, the AChR responds by an extensive change in conformation that affects all subunits and leads to opening of an ion-conducting channel across the plasma membrane (By similarity). Activity is required in glutamatergic neurons to mediate nicotine-induced and nicotine-motivated behaviors (PubMed:17081982, PubMed:23351035).</text>
</comment>
<comment type="subcellular location">
    <subcellularLocation>
        <location evidence="2">Cell membrane</location>
        <topology evidence="4">Multi-pass membrane protein</topology>
    </subcellularLocation>
    <subcellularLocation>
        <location evidence="2">Postsynaptic cell membrane</location>
        <topology evidence="4">Multi-pass membrane protein</topology>
    </subcellularLocation>
</comment>
<comment type="tissue specificity">
    <text evidence="6">Expressed in interneurons, motor neurons, pharyngeal neurons and muscles.</text>
</comment>
<comment type="similarity">
    <text evidence="9">Belongs to the ligand-gated ion channel (TC 1.A.9) family. Acetylcholine receptor (TC 1.A.9.1) subfamily.</text>
</comment>
<keyword id="KW-1003">Cell membrane</keyword>
<keyword id="KW-1015">Disulfide bond</keyword>
<keyword id="KW-0325">Glycoprotein</keyword>
<keyword id="KW-0407">Ion channel</keyword>
<keyword id="KW-0406">Ion transport</keyword>
<keyword id="KW-1071">Ligand-gated ion channel</keyword>
<keyword id="KW-0472">Membrane</keyword>
<keyword id="KW-0628">Postsynaptic cell membrane</keyword>
<keyword id="KW-0675">Receptor</keyword>
<keyword id="KW-1185">Reference proteome</keyword>
<keyword id="KW-0732">Signal</keyword>
<keyword id="KW-0770">Synapse</keyword>
<keyword id="KW-0812">Transmembrane</keyword>
<keyword id="KW-1133">Transmembrane helix</keyword>
<keyword id="KW-0813">Transport</keyword>
<reference evidence="10" key="1">
    <citation type="journal article" date="1998" name="Science">
        <title>Genome sequence of the nematode C. elegans: a platform for investigating biology.</title>
        <authorList>
            <consortium name="The C. elegans sequencing consortium"/>
        </authorList>
    </citation>
    <scope>NUCLEOTIDE SEQUENCE [LARGE SCALE GENOMIC DNA]</scope>
    <source>
        <strain evidence="10">Bristol N2</strain>
    </source>
</reference>
<reference evidence="9" key="2">
    <citation type="journal article" date="2006" name="Cell">
        <title>A C. elegans model of nicotine-dependent behavior: regulation by TRP-family channels.</title>
        <authorList>
            <person name="Feng Z."/>
            <person name="Li W."/>
            <person name="Ward A."/>
            <person name="Piggott B.J."/>
            <person name="Larkspur E.R."/>
            <person name="Sternberg P.W."/>
            <person name="Xu X.Z."/>
        </authorList>
    </citation>
    <scope>FUNCTION</scope>
    <scope>TISSUE SPECIFICITY</scope>
</reference>
<reference evidence="9" key="3">
    <citation type="journal article" date="2013" name="Eur. J. Neurosci.">
        <title>Nicotine-motivated behavior in Caenorhabditis elegans requires the nicotinic acetylcholine receptor subunits acr-5 and acr-15.</title>
        <authorList>
            <person name="Sellings L."/>
            <person name="Pereira S."/>
            <person name="Qian C."/>
            <person name="Dixon-McDougall T."/>
            <person name="Nowak C."/>
            <person name="Zhao B."/>
            <person name="Tyndale R.F."/>
            <person name="van der Kooy D."/>
        </authorList>
    </citation>
    <scope>FUNCTION</scope>
</reference>
<sequence length="479" mass="56334">MLLPILLHFLLLITQLNGSPAEVRLINDLMSGYVREERPTLDSSKPVVVSLGVFLQQIINLSEKEEQLEVNAWLKFQWRDENLRWEPTAYENVTDLRHPPDALWTPDILLYNSVDSEFDSSYKVNLVNYHTGNINWMPPGIFKVSCKLDIYWFPFDEQVCYFKFGSWTYTRDKIQLEKGDFDFSEFIPNGEWIIIDYRTNITVKQYECCPEQYEDITFTLHLRRRTLYYSFNLIAPVLLTMILVILGFTVSPETCEKVGLQISVSLAICIFLTIMSELTPQTSEAVPLLGVFFHTCNFISVLATSFTVYVQSFHFRNQHVHERMDFWMRFILLEWSPWLLRMKMPDRENNFQTLTESWKGRNRRESMARTAFEYADGPVTQIHSMGIMLKDNFEELIYQVKQEKIADEKGIERLRVLQKIYDHVKMIREHDDDNDEDSRVALEWRFAAIVVDRLCLLAFSLLIVVVSIIIALRAPYLFA</sequence>
<name>ACH15_CAEEL</name>